<feature type="chain" id="PRO_0000316311" description="Mlc titration factor A">
    <location>
        <begin position="1"/>
        <end position="265"/>
    </location>
</feature>
<feature type="binding site" evidence="1">
    <location>
        <position position="111"/>
    </location>
    <ligand>
        <name>Zn(2+)</name>
        <dbReference type="ChEBI" id="CHEBI:29105"/>
    </ligand>
</feature>
<feature type="binding site" evidence="1">
    <location>
        <position position="148"/>
    </location>
    <ligand>
        <name>Zn(2+)</name>
        <dbReference type="ChEBI" id="CHEBI:29105"/>
    </ligand>
</feature>
<feature type="binding site" evidence="1">
    <location>
        <position position="152"/>
    </location>
    <ligand>
        <name>Zn(2+)</name>
        <dbReference type="ChEBI" id="CHEBI:29105"/>
    </ligand>
</feature>
<feature type="binding site" evidence="1">
    <location>
        <position position="211"/>
    </location>
    <ligand>
        <name>Zn(2+)</name>
        <dbReference type="ChEBI" id="CHEBI:29105"/>
    </ligand>
</feature>
<proteinExistence type="inferred from homology"/>
<dbReference type="EC" id="3.4.11.-" evidence="1"/>
<dbReference type="EMBL" id="CP000800">
    <property type="protein sequence ID" value="ABV20769.1"/>
    <property type="molecule type" value="Genomic_DNA"/>
</dbReference>
<dbReference type="RefSeq" id="WP_012138706.1">
    <property type="nucleotide sequence ID" value="NC_009801.1"/>
</dbReference>
<dbReference type="SMR" id="A7ZNE5"/>
<dbReference type="MEROPS" id="M90.001"/>
<dbReference type="KEGG" id="ecw:EcE24377A_2259"/>
<dbReference type="HOGENOM" id="CLU_063037_2_0_6"/>
<dbReference type="Proteomes" id="UP000001122">
    <property type="component" value="Chromosome"/>
</dbReference>
<dbReference type="GO" id="GO:0005829">
    <property type="term" value="C:cytosol"/>
    <property type="evidence" value="ECO:0007669"/>
    <property type="project" value="TreeGrafter"/>
</dbReference>
<dbReference type="GO" id="GO:0004177">
    <property type="term" value="F:aminopeptidase activity"/>
    <property type="evidence" value="ECO:0007669"/>
    <property type="project" value="UniProtKB-UniRule"/>
</dbReference>
<dbReference type="GO" id="GO:0008237">
    <property type="term" value="F:metallopeptidase activity"/>
    <property type="evidence" value="ECO:0007669"/>
    <property type="project" value="UniProtKB-UniRule"/>
</dbReference>
<dbReference type="GO" id="GO:0008270">
    <property type="term" value="F:zinc ion binding"/>
    <property type="evidence" value="ECO:0007669"/>
    <property type="project" value="UniProtKB-UniRule"/>
</dbReference>
<dbReference type="GO" id="GO:0006508">
    <property type="term" value="P:proteolysis"/>
    <property type="evidence" value="ECO:0007669"/>
    <property type="project" value="UniProtKB-KW"/>
</dbReference>
<dbReference type="CDD" id="cd20169">
    <property type="entry name" value="Peptidase_M90_mtfA"/>
    <property type="match status" value="1"/>
</dbReference>
<dbReference type="FunFam" id="1.10.472.150:FF:000001">
    <property type="entry name" value="Protein MtfA"/>
    <property type="match status" value="1"/>
</dbReference>
<dbReference type="FunFam" id="3.40.390.10:FF:000012">
    <property type="entry name" value="Protein MtfA"/>
    <property type="match status" value="1"/>
</dbReference>
<dbReference type="Gene3D" id="3.40.390.10">
    <property type="entry name" value="Collagenase (Catalytic Domain)"/>
    <property type="match status" value="1"/>
</dbReference>
<dbReference type="Gene3D" id="1.10.472.150">
    <property type="entry name" value="Glucose-regulated metallo-peptidase M90, N-terminal domain"/>
    <property type="match status" value="1"/>
</dbReference>
<dbReference type="HAMAP" id="MF_01593">
    <property type="entry name" value="MtfA"/>
    <property type="match status" value="1"/>
</dbReference>
<dbReference type="InterPro" id="IPR024079">
    <property type="entry name" value="MetalloPept_cat_dom_sf"/>
</dbReference>
<dbReference type="InterPro" id="IPR057256">
    <property type="entry name" value="MtfA_enterob"/>
</dbReference>
<dbReference type="InterPro" id="IPR010384">
    <property type="entry name" value="MtfA_fam"/>
</dbReference>
<dbReference type="InterPro" id="IPR042252">
    <property type="entry name" value="MtfA_N"/>
</dbReference>
<dbReference type="NCBIfam" id="NF011939">
    <property type="entry name" value="PRK15410.1"/>
    <property type="match status" value="1"/>
</dbReference>
<dbReference type="PANTHER" id="PTHR30164">
    <property type="entry name" value="MTFA PEPTIDASE"/>
    <property type="match status" value="1"/>
</dbReference>
<dbReference type="PANTHER" id="PTHR30164:SF2">
    <property type="entry name" value="PROTEIN MTFA"/>
    <property type="match status" value="1"/>
</dbReference>
<dbReference type="Pfam" id="PF06167">
    <property type="entry name" value="Peptidase_M90"/>
    <property type="match status" value="1"/>
</dbReference>
<dbReference type="SUPFAM" id="SSF55486">
    <property type="entry name" value="Metalloproteases ('zincins'), catalytic domain"/>
    <property type="match status" value="1"/>
</dbReference>
<sequence>MIKWPWKVQESAHQTALPWQEALSIPLLTCLTEQEQSKLVTLAERFLQQKRLVPLQGFELDSLRSCRIALLFCLPVLELGLEWLDGFHEVLIYPAPFVVDDEWEDDIGLVHNQRIVQSGQSWQQGPIVLNWLDIQDSFDASGFNLIIHEVAHKLDTRNGDRASGVPFIPLREVAGWEHDLHAAMNNIQEEIELVGENAASIDAYAASDPAECFAVLSEYFFSAPELFAPGFPSLWQRFCQFYQQDPLQRLHRTNDTDSFSATNVH</sequence>
<accession>A7ZNE5</accession>
<name>MTFA_ECO24</name>
<reference key="1">
    <citation type="journal article" date="2008" name="J. Bacteriol.">
        <title>The pangenome structure of Escherichia coli: comparative genomic analysis of E. coli commensal and pathogenic isolates.</title>
        <authorList>
            <person name="Rasko D.A."/>
            <person name="Rosovitz M.J."/>
            <person name="Myers G.S.A."/>
            <person name="Mongodin E.F."/>
            <person name="Fricke W.F."/>
            <person name="Gajer P."/>
            <person name="Crabtree J."/>
            <person name="Sebaihia M."/>
            <person name="Thomson N.R."/>
            <person name="Chaudhuri R."/>
            <person name="Henderson I.R."/>
            <person name="Sperandio V."/>
            <person name="Ravel J."/>
        </authorList>
    </citation>
    <scope>NUCLEOTIDE SEQUENCE [LARGE SCALE GENOMIC DNA]</scope>
    <source>
        <strain>E24377A / ETEC</strain>
    </source>
</reference>
<organism>
    <name type="scientific">Escherichia coli O139:H28 (strain E24377A / ETEC)</name>
    <dbReference type="NCBI Taxonomy" id="331111"/>
    <lineage>
        <taxon>Bacteria</taxon>
        <taxon>Pseudomonadati</taxon>
        <taxon>Pseudomonadota</taxon>
        <taxon>Gammaproteobacteria</taxon>
        <taxon>Enterobacterales</taxon>
        <taxon>Enterobacteriaceae</taxon>
        <taxon>Escherichia</taxon>
    </lineage>
</organism>
<evidence type="ECO:0000255" key="1">
    <source>
        <dbReference type="HAMAP-Rule" id="MF_01593"/>
    </source>
</evidence>
<gene>
    <name evidence="1" type="primary">mtfA</name>
    <name type="ordered locus">EcE24377A_2259</name>
</gene>
<keyword id="KW-0031">Aminopeptidase</keyword>
<keyword id="KW-0963">Cytoplasm</keyword>
<keyword id="KW-0378">Hydrolase</keyword>
<keyword id="KW-0479">Metal-binding</keyword>
<keyword id="KW-0482">Metalloprotease</keyword>
<keyword id="KW-0645">Protease</keyword>
<keyword id="KW-1185">Reference proteome</keyword>
<keyword id="KW-0862">Zinc</keyword>
<protein>
    <recommendedName>
        <fullName evidence="1">Mlc titration factor A</fullName>
    </recommendedName>
    <alternativeName>
        <fullName evidence="1">Probable zinc metallopeptidase MtfA</fullName>
        <ecNumber evidence="1">3.4.11.-</ecNumber>
    </alternativeName>
</protein>
<comment type="function">
    <text evidence="1">Involved in the modulation of the activity of the glucose-phosphotransferase system (glucose-PTS). Interacts with the transcriptional repressor Mlc, preventing its interaction with DNA and leading to the modulation of expression of genes regulated by Mlc, including ptsG, which encodes the PTS system glucose-specific EIICB component.</text>
</comment>
<comment type="function">
    <text evidence="1">Shows zinc-dependent metallopeptidase activity.</text>
</comment>
<comment type="cofactor">
    <cofactor evidence="1">
        <name>Zn(2+)</name>
        <dbReference type="ChEBI" id="CHEBI:29105"/>
    </cofactor>
    <text evidence="1">Binds 1 zinc ion per subunit.</text>
</comment>
<comment type="subunit">
    <text evidence="1">Interacts with Mlc.</text>
</comment>
<comment type="subcellular location">
    <subcellularLocation>
        <location evidence="1">Cytoplasm</location>
    </subcellularLocation>
</comment>
<comment type="similarity">
    <text evidence="1">Belongs to the MtfA family.</text>
</comment>